<organism>
    <name type="scientific">Oenococcus oeni (strain ATCC BAA-331 / PSU-1)</name>
    <dbReference type="NCBI Taxonomy" id="203123"/>
    <lineage>
        <taxon>Bacteria</taxon>
        <taxon>Bacillati</taxon>
        <taxon>Bacillota</taxon>
        <taxon>Bacilli</taxon>
        <taxon>Lactobacillales</taxon>
        <taxon>Lactobacillaceae</taxon>
        <taxon>Oenococcus</taxon>
    </lineage>
</organism>
<accession>Q04G85</accession>
<evidence type="ECO:0000255" key="1">
    <source>
        <dbReference type="HAMAP-Rule" id="MF_01325"/>
    </source>
</evidence>
<evidence type="ECO:0000256" key="2">
    <source>
        <dbReference type="SAM" id="MobiDB-lite"/>
    </source>
</evidence>
<evidence type="ECO:0000305" key="3"/>
<gene>
    <name evidence="1" type="primary">rplC</name>
    <name type="ordered locus">OEOE_0595</name>
</gene>
<reference key="1">
    <citation type="journal article" date="2006" name="Proc. Natl. Acad. Sci. U.S.A.">
        <title>Comparative genomics of the lactic acid bacteria.</title>
        <authorList>
            <person name="Makarova K.S."/>
            <person name="Slesarev A."/>
            <person name="Wolf Y.I."/>
            <person name="Sorokin A."/>
            <person name="Mirkin B."/>
            <person name="Koonin E.V."/>
            <person name="Pavlov A."/>
            <person name="Pavlova N."/>
            <person name="Karamychev V."/>
            <person name="Polouchine N."/>
            <person name="Shakhova V."/>
            <person name="Grigoriev I."/>
            <person name="Lou Y."/>
            <person name="Rohksar D."/>
            <person name="Lucas S."/>
            <person name="Huang K."/>
            <person name="Goodstein D.M."/>
            <person name="Hawkins T."/>
            <person name="Plengvidhya V."/>
            <person name="Welker D."/>
            <person name="Hughes J."/>
            <person name="Goh Y."/>
            <person name="Benson A."/>
            <person name="Baldwin K."/>
            <person name="Lee J.-H."/>
            <person name="Diaz-Muniz I."/>
            <person name="Dosti B."/>
            <person name="Smeianov V."/>
            <person name="Wechter W."/>
            <person name="Barabote R."/>
            <person name="Lorca G."/>
            <person name="Altermann E."/>
            <person name="Barrangou R."/>
            <person name="Ganesan B."/>
            <person name="Xie Y."/>
            <person name="Rawsthorne H."/>
            <person name="Tamir D."/>
            <person name="Parker C."/>
            <person name="Breidt F."/>
            <person name="Broadbent J.R."/>
            <person name="Hutkins R."/>
            <person name="O'Sullivan D."/>
            <person name="Steele J."/>
            <person name="Unlu G."/>
            <person name="Saier M.H. Jr."/>
            <person name="Klaenhammer T."/>
            <person name="Richardson P."/>
            <person name="Kozyavkin S."/>
            <person name="Weimer B.C."/>
            <person name="Mills D.A."/>
        </authorList>
    </citation>
    <scope>NUCLEOTIDE SEQUENCE [LARGE SCALE GENOMIC DNA]</scope>
    <source>
        <strain>ATCC BAA-331 / PSU-1</strain>
    </source>
</reference>
<name>RL3_OENOB</name>
<proteinExistence type="inferred from homology"/>
<comment type="function">
    <text evidence="1">One of the primary rRNA binding proteins, it binds directly near the 3'-end of the 23S rRNA, where it nucleates assembly of the 50S subunit.</text>
</comment>
<comment type="subunit">
    <text evidence="1">Part of the 50S ribosomal subunit. Forms a cluster with proteins L14 and L19.</text>
</comment>
<comment type="similarity">
    <text evidence="1">Belongs to the universal ribosomal protein uL3 family.</text>
</comment>
<feature type="chain" id="PRO_1000052099" description="Large ribosomal subunit protein uL3">
    <location>
        <begin position="1"/>
        <end position="247"/>
    </location>
</feature>
<feature type="region of interest" description="Disordered" evidence="2">
    <location>
        <begin position="124"/>
        <end position="145"/>
    </location>
</feature>
<feature type="region of interest" description="Disordered" evidence="2">
    <location>
        <begin position="218"/>
        <end position="247"/>
    </location>
</feature>
<feature type="compositionally biased region" description="Basic and acidic residues" evidence="2">
    <location>
        <begin position="222"/>
        <end position="241"/>
    </location>
</feature>
<protein>
    <recommendedName>
        <fullName evidence="1">Large ribosomal subunit protein uL3</fullName>
    </recommendedName>
    <alternativeName>
        <fullName evidence="3">50S ribosomal protein L3</fullName>
    </alternativeName>
</protein>
<dbReference type="EMBL" id="CP000411">
    <property type="protein sequence ID" value="ABJ56537.1"/>
    <property type="molecule type" value="Genomic_DNA"/>
</dbReference>
<dbReference type="RefSeq" id="WP_002818455.1">
    <property type="nucleotide sequence ID" value="NC_008528.1"/>
</dbReference>
<dbReference type="SMR" id="Q04G85"/>
<dbReference type="STRING" id="203123.OEOE_0595"/>
<dbReference type="GeneID" id="75065417"/>
<dbReference type="KEGG" id="ooe:OEOE_0595"/>
<dbReference type="eggNOG" id="COG0087">
    <property type="taxonomic scope" value="Bacteria"/>
</dbReference>
<dbReference type="HOGENOM" id="CLU_044142_4_0_9"/>
<dbReference type="Proteomes" id="UP000000774">
    <property type="component" value="Chromosome"/>
</dbReference>
<dbReference type="GO" id="GO:0022625">
    <property type="term" value="C:cytosolic large ribosomal subunit"/>
    <property type="evidence" value="ECO:0007669"/>
    <property type="project" value="TreeGrafter"/>
</dbReference>
<dbReference type="GO" id="GO:0019843">
    <property type="term" value="F:rRNA binding"/>
    <property type="evidence" value="ECO:0007669"/>
    <property type="project" value="UniProtKB-UniRule"/>
</dbReference>
<dbReference type="GO" id="GO:0003735">
    <property type="term" value="F:structural constituent of ribosome"/>
    <property type="evidence" value="ECO:0007669"/>
    <property type="project" value="InterPro"/>
</dbReference>
<dbReference type="GO" id="GO:0006412">
    <property type="term" value="P:translation"/>
    <property type="evidence" value="ECO:0007669"/>
    <property type="project" value="UniProtKB-UniRule"/>
</dbReference>
<dbReference type="FunFam" id="2.40.30.10:FF:000004">
    <property type="entry name" value="50S ribosomal protein L3"/>
    <property type="match status" value="1"/>
</dbReference>
<dbReference type="FunFam" id="3.30.160.810:FF:000001">
    <property type="entry name" value="50S ribosomal protein L3"/>
    <property type="match status" value="1"/>
</dbReference>
<dbReference type="Gene3D" id="3.30.160.810">
    <property type="match status" value="1"/>
</dbReference>
<dbReference type="Gene3D" id="2.40.30.10">
    <property type="entry name" value="Translation factors"/>
    <property type="match status" value="1"/>
</dbReference>
<dbReference type="HAMAP" id="MF_01325_B">
    <property type="entry name" value="Ribosomal_uL3_B"/>
    <property type="match status" value="1"/>
</dbReference>
<dbReference type="InterPro" id="IPR000597">
    <property type="entry name" value="Ribosomal_uL3"/>
</dbReference>
<dbReference type="InterPro" id="IPR019927">
    <property type="entry name" value="Ribosomal_uL3_bac/org-type"/>
</dbReference>
<dbReference type="InterPro" id="IPR019926">
    <property type="entry name" value="Ribosomal_uL3_CS"/>
</dbReference>
<dbReference type="InterPro" id="IPR009000">
    <property type="entry name" value="Transl_B-barrel_sf"/>
</dbReference>
<dbReference type="NCBIfam" id="TIGR03625">
    <property type="entry name" value="L3_bact"/>
    <property type="match status" value="1"/>
</dbReference>
<dbReference type="PANTHER" id="PTHR11229">
    <property type="entry name" value="50S RIBOSOMAL PROTEIN L3"/>
    <property type="match status" value="1"/>
</dbReference>
<dbReference type="PANTHER" id="PTHR11229:SF16">
    <property type="entry name" value="LARGE RIBOSOMAL SUBUNIT PROTEIN UL3C"/>
    <property type="match status" value="1"/>
</dbReference>
<dbReference type="Pfam" id="PF00297">
    <property type="entry name" value="Ribosomal_L3"/>
    <property type="match status" value="1"/>
</dbReference>
<dbReference type="SUPFAM" id="SSF50447">
    <property type="entry name" value="Translation proteins"/>
    <property type="match status" value="1"/>
</dbReference>
<dbReference type="PROSITE" id="PS00474">
    <property type="entry name" value="RIBOSOMAL_L3"/>
    <property type="match status" value="1"/>
</dbReference>
<sequence length="247" mass="26394">MTKGILGRKVGMTQVFTDKGELIPVTVIEALPNVVLQVKTPETDGYSALQLGVFDKRKIAANKPEQGHAKKASAAPKRYVREIRDAQGDYKQGDKVKVDVFAAGEYVDVQGITKGHGFQGSIKRLGQSRGPMAHGSRYHRRPGSMGSIINKVFKGKLLPGQMGGDLRTAQKLLVAGVDPANNLILIKGNVPGANKSFVTIKSTVKPFKASKIKLGGTVGQEVKAEAKDTASTEKKQAETKNDSASAE</sequence>
<keyword id="KW-1185">Reference proteome</keyword>
<keyword id="KW-0687">Ribonucleoprotein</keyword>
<keyword id="KW-0689">Ribosomal protein</keyword>
<keyword id="KW-0694">RNA-binding</keyword>
<keyword id="KW-0699">rRNA-binding</keyword>